<sequence length="237" mass="26498">MENQPKLNSSKEVIAFLAERFPLCFTAEGEARPLKIGIFQDLVERVQGEENLSKTQLRSALRLYTSSWRYLYGVKVGAERVDLDGNPCGVLEEQHVEHARKQLEEAKARVQAQRAEQQAKKREAAIAAGETPEPRRPRPAGKKPAPRREAGAAPENRKPRQSPRPQQVRPPRPQVEENQPRPVPVTDISKLQIGQEIKVRAGKSAMDATVLEIAKDGVRVQLSSGLAMIVRAEHLQF</sequence>
<reference key="1">
    <citation type="journal article" date="2007" name="PLoS Genet.">
        <title>The complete genome sequence of Yersinia pseudotuberculosis IP31758, the causative agent of Far East scarlet-like fever.</title>
        <authorList>
            <person name="Eppinger M."/>
            <person name="Rosovitz M.J."/>
            <person name="Fricke W.F."/>
            <person name="Rasko D.A."/>
            <person name="Kokorina G."/>
            <person name="Fayolle C."/>
            <person name="Lindler L.E."/>
            <person name="Carniel E."/>
            <person name="Ravel J."/>
        </authorList>
    </citation>
    <scope>NUCLEOTIDE SEQUENCE [LARGE SCALE GENOMIC DNA]</scope>
    <source>
        <strain>IP 31758</strain>
    </source>
</reference>
<proteinExistence type="inferred from homology"/>
<comment type="function">
    <text evidence="1">RNA chaperone with significant RNA binding, RNA strand exchange and RNA duplexing activities. May regulate ProP activity through an RNA-based, post-transcriptional mechanism.</text>
</comment>
<comment type="subcellular location">
    <subcellularLocation>
        <location evidence="1">Cytoplasm</location>
    </subcellularLocation>
</comment>
<comment type="similarity">
    <text evidence="1">Belongs to the ProQ family.</text>
</comment>
<organism>
    <name type="scientific">Yersinia pseudotuberculosis serotype O:1b (strain IP 31758)</name>
    <dbReference type="NCBI Taxonomy" id="349747"/>
    <lineage>
        <taxon>Bacteria</taxon>
        <taxon>Pseudomonadati</taxon>
        <taxon>Pseudomonadota</taxon>
        <taxon>Gammaproteobacteria</taxon>
        <taxon>Enterobacterales</taxon>
        <taxon>Yersiniaceae</taxon>
        <taxon>Yersinia</taxon>
    </lineage>
</organism>
<accession>A7FHC0</accession>
<dbReference type="EMBL" id="CP000720">
    <property type="protein sequence ID" value="ABS48069.1"/>
    <property type="molecule type" value="Genomic_DNA"/>
</dbReference>
<dbReference type="RefSeq" id="WP_002210849.1">
    <property type="nucleotide sequence ID" value="NC_009708.1"/>
</dbReference>
<dbReference type="SMR" id="A7FHC0"/>
<dbReference type="GeneID" id="96665860"/>
<dbReference type="KEGG" id="ypi:YpsIP31758_1671"/>
<dbReference type="HOGENOM" id="CLU_113254_0_0_6"/>
<dbReference type="Proteomes" id="UP000002412">
    <property type="component" value="Chromosome"/>
</dbReference>
<dbReference type="GO" id="GO:0005829">
    <property type="term" value="C:cytosol"/>
    <property type="evidence" value="ECO:0007669"/>
    <property type="project" value="TreeGrafter"/>
</dbReference>
<dbReference type="GO" id="GO:0033592">
    <property type="term" value="F:RNA strand annealing activity"/>
    <property type="evidence" value="ECO:0007669"/>
    <property type="project" value="UniProtKB-UniRule"/>
</dbReference>
<dbReference type="GO" id="GO:0034057">
    <property type="term" value="F:RNA strand-exchange activity"/>
    <property type="evidence" value="ECO:0007669"/>
    <property type="project" value="UniProtKB-UniRule"/>
</dbReference>
<dbReference type="GO" id="GO:0010608">
    <property type="term" value="P:post-transcriptional regulation of gene expression"/>
    <property type="evidence" value="ECO:0007669"/>
    <property type="project" value="InterPro"/>
</dbReference>
<dbReference type="FunFam" id="1.10.1710.10:FF:000001">
    <property type="entry name" value="RNA chaperone ProQ"/>
    <property type="match status" value="1"/>
</dbReference>
<dbReference type="Gene3D" id="1.10.1710.10">
    <property type="entry name" value="ProQ/FinO domain"/>
    <property type="match status" value="1"/>
</dbReference>
<dbReference type="HAMAP" id="MF_00749">
    <property type="entry name" value="ProQ"/>
    <property type="match status" value="1"/>
</dbReference>
<dbReference type="InterPro" id="IPR023529">
    <property type="entry name" value="ProQ"/>
</dbReference>
<dbReference type="InterPro" id="IPR016103">
    <property type="entry name" value="ProQ/FinO"/>
</dbReference>
<dbReference type="InterPro" id="IPR036442">
    <property type="entry name" value="ProQ/FinO_sf"/>
</dbReference>
<dbReference type="InterPro" id="IPR035236">
    <property type="entry name" value="ProQ_C"/>
</dbReference>
<dbReference type="NCBIfam" id="NF003434">
    <property type="entry name" value="PRK04950.1"/>
    <property type="match status" value="1"/>
</dbReference>
<dbReference type="PANTHER" id="PTHR38106">
    <property type="entry name" value="RNA CHAPERONE PROQ"/>
    <property type="match status" value="1"/>
</dbReference>
<dbReference type="PANTHER" id="PTHR38106:SF1">
    <property type="entry name" value="RNA CHAPERONE PROQ"/>
    <property type="match status" value="1"/>
</dbReference>
<dbReference type="Pfam" id="PF04352">
    <property type="entry name" value="ProQ"/>
    <property type="match status" value="1"/>
</dbReference>
<dbReference type="Pfam" id="PF17516">
    <property type="entry name" value="ProQ_C"/>
    <property type="match status" value="1"/>
</dbReference>
<dbReference type="SMART" id="SM00945">
    <property type="entry name" value="ProQ"/>
    <property type="match status" value="1"/>
</dbReference>
<dbReference type="SUPFAM" id="SSF48657">
    <property type="entry name" value="FinO-like"/>
    <property type="match status" value="1"/>
</dbReference>
<gene>
    <name evidence="1" type="primary">proQ</name>
    <name type="ordered locus">YpsIP31758_1671</name>
</gene>
<evidence type="ECO:0000255" key="1">
    <source>
        <dbReference type="HAMAP-Rule" id="MF_00749"/>
    </source>
</evidence>
<evidence type="ECO:0000256" key="2">
    <source>
        <dbReference type="SAM" id="MobiDB-lite"/>
    </source>
</evidence>
<feature type="chain" id="PRO_1000062185" description="RNA chaperone ProQ">
    <location>
        <begin position="1"/>
        <end position="237"/>
    </location>
</feature>
<feature type="region of interest" description="Disordered" evidence="2">
    <location>
        <begin position="106"/>
        <end position="188"/>
    </location>
</feature>
<feature type="compositionally biased region" description="Basic and acidic residues" evidence="2">
    <location>
        <begin position="146"/>
        <end position="158"/>
    </location>
</feature>
<keyword id="KW-0143">Chaperone</keyword>
<keyword id="KW-0963">Cytoplasm</keyword>
<keyword id="KW-0694">RNA-binding</keyword>
<name>PROQ_YERP3</name>
<protein>
    <recommendedName>
        <fullName evidence="1">RNA chaperone ProQ</fullName>
    </recommendedName>
</protein>